<name>DUS_STAAM</name>
<keyword id="KW-0285">Flavoprotein</keyword>
<keyword id="KW-0288">FMN</keyword>
<keyword id="KW-0521">NADP</keyword>
<keyword id="KW-0560">Oxidoreductase</keyword>
<keyword id="KW-0694">RNA-binding</keyword>
<keyword id="KW-0819">tRNA processing</keyword>
<keyword id="KW-0820">tRNA-binding</keyword>
<sequence>MKENFWSELPRPFFILAPMEDVTDIVFRHVVSEAARPDVFFTEFTNTESFCHPEGIHSVRGRLTFSEDEHPMVAHIWGDKPEQFRETSIQLAKMGFKGIDLNMGCPVANVAKKGKGSGLILRPDVAAEIIQATKAGGLPVSVKTRLGYYEIDEWKDWLKHVFEQDIANLSIHLRTRKEMSKVDAHWELIEAIKNLRDEIAPNTLLTINGDIPDRKTGLELAEKYGIDGVMIGRGIFHNPFAFEKEPREHTSKELLDLLRLHLSLFNKYEKDEIRQFKSLRRFFKIYVRGIRGASELRHQLMNTQSIAEARALLDEFEAQMDEDVKIEL</sequence>
<evidence type="ECO:0000250" key="1">
    <source>
        <dbReference type="UniProtKB" id="P33371"/>
    </source>
</evidence>
<evidence type="ECO:0000250" key="2">
    <source>
        <dbReference type="UniProtKB" id="Q5SMC7"/>
    </source>
</evidence>
<evidence type="ECO:0000305" key="3"/>
<reference key="1">
    <citation type="journal article" date="2001" name="Lancet">
        <title>Whole genome sequencing of meticillin-resistant Staphylococcus aureus.</title>
        <authorList>
            <person name="Kuroda M."/>
            <person name="Ohta T."/>
            <person name="Uchiyama I."/>
            <person name="Baba T."/>
            <person name="Yuzawa H."/>
            <person name="Kobayashi I."/>
            <person name="Cui L."/>
            <person name="Oguchi A."/>
            <person name="Aoki K."/>
            <person name="Nagai Y."/>
            <person name="Lian J.-Q."/>
            <person name="Ito T."/>
            <person name="Kanamori M."/>
            <person name="Matsumaru H."/>
            <person name="Maruyama A."/>
            <person name="Murakami H."/>
            <person name="Hosoyama A."/>
            <person name="Mizutani-Ui Y."/>
            <person name="Takahashi N.K."/>
            <person name="Sawano T."/>
            <person name="Inoue R."/>
            <person name="Kaito C."/>
            <person name="Sekimizu K."/>
            <person name="Hirakawa H."/>
            <person name="Kuhara S."/>
            <person name="Goto S."/>
            <person name="Yabuzaki J."/>
            <person name="Kanehisa M."/>
            <person name="Yamashita A."/>
            <person name="Oshima K."/>
            <person name="Furuya K."/>
            <person name="Yoshino C."/>
            <person name="Shiba T."/>
            <person name="Hattori M."/>
            <person name="Ogasawara N."/>
            <person name="Hayashi H."/>
            <person name="Hiramatsu K."/>
        </authorList>
    </citation>
    <scope>NUCLEOTIDE SEQUENCE [LARGE SCALE GENOMIC DNA]</scope>
    <source>
        <strain>Mu50 / ATCC 700699</strain>
    </source>
</reference>
<protein>
    <recommendedName>
        <fullName>Probable tRNA-dihydrouridine synthase</fullName>
        <ecNumber>1.3.1.-</ecNumber>
    </recommendedName>
</protein>
<accession>P67716</accession>
<accession>Q99XC3</accession>
<organism>
    <name type="scientific">Staphylococcus aureus (strain Mu50 / ATCC 700699)</name>
    <dbReference type="NCBI Taxonomy" id="158878"/>
    <lineage>
        <taxon>Bacteria</taxon>
        <taxon>Bacillati</taxon>
        <taxon>Bacillota</taxon>
        <taxon>Bacilli</taxon>
        <taxon>Bacillales</taxon>
        <taxon>Staphylococcaceae</taxon>
        <taxon>Staphylococcus</taxon>
    </lineage>
</organism>
<dbReference type="EC" id="1.3.1.-"/>
<dbReference type="EMBL" id="BA000017">
    <property type="protein sequence ID" value="BAB56251.1"/>
    <property type="molecule type" value="Genomic_DNA"/>
</dbReference>
<dbReference type="RefSeq" id="WP_000662022.1">
    <property type="nucleotide sequence ID" value="NC_002758.2"/>
</dbReference>
<dbReference type="SMR" id="P67716"/>
<dbReference type="KEGG" id="sav:SAV0089"/>
<dbReference type="HOGENOM" id="CLU_013299_0_3_9"/>
<dbReference type="PhylomeDB" id="P67716"/>
<dbReference type="Proteomes" id="UP000002481">
    <property type="component" value="Chromosome"/>
</dbReference>
<dbReference type="GO" id="GO:0050660">
    <property type="term" value="F:flavin adenine dinucleotide binding"/>
    <property type="evidence" value="ECO:0007669"/>
    <property type="project" value="InterPro"/>
</dbReference>
<dbReference type="GO" id="GO:0000049">
    <property type="term" value="F:tRNA binding"/>
    <property type="evidence" value="ECO:0007669"/>
    <property type="project" value="UniProtKB-KW"/>
</dbReference>
<dbReference type="GO" id="GO:0017150">
    <property type="term" value="F:tRNA dihydrouridine synthase activity"/>
    <property type="evidence" value="ECO:0007669"/>
    <property type="project" value="InterPro"/>
</dbReference>
<dbReference type="CDD" id="cd02801">
    <property type="entry name" value="DUS_like_FMN"/>
    <property type="match status" value="1"/>
</dbReference>
<dbReference type="Gene3D" id="3.20.20.70">
    <property type="entry name" value="Aldolase class I"/>
    <property type="match status" value="1"/>
</dbReference>
<dbReference type="Gene3D" id="1.10.1200.80">
    <property type="entry name" value="Putative flavin oxidoreducatase, domain 2"/>
    <property type="match status" value="1"/>
</dbReference>
<dbReference type="InterPro" id="IPR013785">
    <property type="entry name" value="Aldolase_TIM"/>
</dbReference>
<dbReference type="InterPro" id="IPR035587">
    <property type="entry name" value="DUS-like_FMN-bd"/>
</dbReference>
<dbReference type="InterPro" id="IPR001269">
    <property type="entry name" value="DUS_fam"/>
</dbReference>
<dbReference type="InterPro" id="IPR024036">
    <property type="entry name" value="tRNA-dHydroUridine_Synthase_C"/>
</dbReference>
<dbReference type="InterPro" id="IPR018517">
    <property type="entry name" value="tRNA_hU_synthase_CS"/>
</dbReference>
<dbReference type="PANTHER" id="PTHR11082:SF25">
    <property type="entry name" value="DUS-LIKE FMN-BINDING DOMAIN-CONTAINING PROTEIN"/>
    <property type="match status" value="1"/>
</dbReference>
<dbReference type="PANTHER" id="PTHR11082">
    <property type="entry name" value="TRNA-DIHYDROURIDINE SYNTHASE"/>
    <property type="match status" value="1"/>
</dbReference>
<dbReference type="Pfam" id="PF01207">
    <property type="entry name" value="Dus"/>
    <property type="match status" value="1"/>
</dbReference>
<dbReference type="PIRSF" id="PIRSF006621">
    <property type="entry name" value="Dus"/>
    <property type="match status" value="1"/>
</dbReference>
<dbReference type="SUPFAM" id="SSF51395">
    <property type="entry name" value="FMN-linked oxidoreductases"/>
    <property type="match status" value="1"/>
</dbReference>
<dbReference type="PROSITE" id="PS01136">
    <property type="entry name" value="UPF0034"/>
    <property type="match status" value="1"/>
</dbReference>
<feature type="chain" id="PRO_0000162143" description="Probable tRNA-dihydrouridine synthase">
    <location>
        <begin position="1"/>
        <end position="328"/>
    </location>
</feature>
<feature type="active site" description="Proton donor" evidence="2">
    <location>
        <position position="105"/>
    </location>
</feature>
<feature type="binding site" evidence="1">
    <location>
        <begin position="18"/>
        <end position="20"/>
    </location>
    <ligand>
        <name>FMN</name>
        <dbReference type="ChEBI" id="CHEBI:58210"/>
    </ligand>
</feature>
<feature type="binding site" evidence="1">
    <location>
        <position position="143"/>
    </location>
    <ligand>
        <name>FMN</name>
        <dbReference type="ChEBI" id="CHEBI:58210"/>
    </ligand>
</feature>
<feature type="binding site" evidence="1">
    <location>
        <begin position="208"/>
        <end position="210"/>
    </location>
    <ligand>
        <name>FMN</name>
        <dbReference type="ChEBI" id="CHEBI:58210"/>
    </ligand>
</feature>
<feature type="binding site" evidence="1">
    <location>
        <begin position="232"/>
        <end position="233"/>
    </location>
    <ligand>
        <name>FMN</name>
        <dbReference type="ChEBI" id="CHEBI:58210"/>
    </ligand>
</feature>
<gene>
    <name type="primary">dus</name>
    <name type="ordered locus">SAV0089</name>
</gene>
<comment type="function">
    <text evidence="1">Catalyzes the synthesis of 5,6-dihydrouridine (D), a modified base found in the D-loop of most tRNAs, via the reduction of the C5-C6 double bond in target uridines.</text>
</comment>
<comment type="catalytic activity">
    <reaction evidence="1">
        <text>a 5,6-dihydrouridine in tRNA + NAD(+) = a uridine in tRNA + NADH + H(+)</text>
        <dbReference type="Rhea" id="RHEA:54452"/>
        <dbReference type="Rhea" id="RHEA-COMP:13339"/>
        <dbReference type="Rhea" id="RHEA-COMP:13887"/>
        <dbReference type="ChEBI" id="CHEBI:15378"/>
        <dbReference type="ChEBI" id="CHEBI:57540"/>
        <dbReference type="ChEBI" id="CHEBI:57945"/>
        <dbReference type="ChEBI" id="CHEBI:65315"/>
        <dbReference type="ChEBI" id="CHEBI:74443"/>
    </reaction>
</comment>
<comment type="catalytic activity">
    <reaction evidence="1">
        <text>a 5,6-dihydrouridine in tRNA + NADP(+) = a uridine in tRNA + NADPH + H(+)</text>
        <dbReference type="Rhea" id="RHEA:23624"/>
        <dbReference type="Rhea" id="RHEA-COMP:13339"/>
        <dbReference type="Rhea" id="RHEA-COMP:13887"/>
        <dbReference type="ChEBI" id="CHEBI:15378"/>
        <dbReference type="ChEBI" id="CHEBI:57783"/>
        <dbReference type="ChEBI" id="CHEBI:58349"/>
        <dbReference type="ChEBI" id="CHEBI:65315"/>
        <dbReference type="ChEBI" id="CHEBI:74443"/>
    </reaction>
</comment>
<comment type="cofactor">
    <cofactor evidence="1">
        <name>FMN</name>
        <dbReference type="ChEBI" id="CHEBI:58210"/>
    </cofactor>
</comment>
<comment type="similarity">
    <text evidence="3">Belongs to the Dus family.</text>
</comment>
<proteinExistence type="inferred from homology"/>